<keyword id="KW-0175">Coiled coil</keyword>
<keyword id="KW-0597">Phosphoprotein</keyword>
<keyword id="KW-1185">Reference proteome</keyword>
<accession>Q2KI85</accession>
<organism>
    <name type="scientific">Bos taurus</name>
    <name type="common">Bovine</name>
    <dbReference type="NCBI Taxonomy" id="9913"/>
    <lineage>
        <taxon>Eukaryota</taxon>
        <taxon>Metazoa</taxon>
        <taxon>Chordata</taxon>
        <taxon>Craniata</taxon>
        <taxon>Vertebrata</taxon>
        <taxon>Euteleostomi</taxon>
        <taxon>Mammalia</taxon>
        <taxon>Eutheria</taxon>
        <taxon>Laurasiatheria</taxon>
        <taxon>Artiodactyla</taxon>
        <taxon>Ruminantia</taxon>
        <taxon>Pecora</taxon>
        <taxon>Bovidae</taxon>
        <taxon>Bovinae</taxon>
        <taxon>Bos</taxon>
    </lineage>
</organism>
<comment type="similarity">
    <text evidence="5">Belongs to the smoothelin family.</text>
</comment>
<evidence type="ECO:0000250" key="1">
    <source>
        <dbReference type="UniProtKB" id="Q8CI12"/>
    </source>
</evidence>
<evidence type="ECO:0000255" key="2"/>
<evidence type="ECO:0000255" key="3">
    <source>
        <dbReference type="PROSITE-ProRule" id="PRU00044"/>
    </source>
</evidence>
<evidence type="ECO:0000256" key="4">
    <source>
        <dbReference type="SAM" id="MobiDB-lite"/>
    </source>
</evidence>
<evidence type="ECO:0000305" key="5"/>
<sequence length="458" mass="49814">MESAPDAEEARTVREALGRYEAALEGAVRALHEDMQGLQRGVEQRVAEALRLAGPLARTVAELQRDNQRLQTQLERLTRQVESLGLTTGLAPAPGTPSPPPAPGVPNRAPRLGTARFASHATFSLSGRSQSLDHHDEASELEMRRTSNSCIIENGHQPGADPGDGPPEATQTIPAPEPPKPRPVSLSLRLPHQPVTAVTRVSERFSGETSATALSPTSAAILGGLSSSPSEATTPWTPSPSEKNSSLPRSLSSSGFGAMTASRNNNSPPLVTPPQSPPSPQPPATTQAHRPGERRRELVRSQTLPRTSGAQARKALFEKWEQDTAGKGKGETRAKLKRSQSFGVASASSIKQILLEWCRSKTLGYQHVDLQNFSSSWSDGMAFCALVHSFFPDAFDYNALSPTQRRQNFELAFTMAENLANCERLIEVEDMMVMGRKPDPMCVFTYVQSLYNHLRRFE</sequence>
<feature type="chain" id="PRO_0000317277" description="Smoothelin-like protein 2">
    <location>
        <begin position="1"/>
        <end position="458"/>
    </location>
</feature>
<feature type="domain" description="Calponin-homology (CH)" evidence="3">
    <location>
        <begin position="348"/>
        <end position="455"/>
    </location>
</feature>
<feature type="region of interest" description="Disordered" evidence="4">
    <location>
        <begin position="87"/>
        <end position="111"/>
    </location>
</feature>
<feature type="region of interest" description="Disordered" evidence="4">
    <location>
        <begin position="123"/>
        <end position="142"/>
    </location>
</feature>
<feature type="region of interest" description="Disordered" evidence="4">
    <location>
        <begin position="151"/>
        <end position="312"/>
    </location>
</feature>
<feature type="coiled-coil region" evidence="2">
    <location>
        <begin position="24"/>
        <end position="88"/>
    </location>
</feature>
<feature type="compositionally biased region" description="Pro residues" evidence="4">
    <location>
        <begin position="94"/>
        <end position="104"/>
    </location>
</feature>
<feature type="compositionally biased region" description="Basic and acidic residues" evidence="4">
    <location>
        <begin position="131"/>
        <end position="142"/>
    </location>
</feature>
<feature type="compositionally biased region" description="Low complexity" evidence="4">
    <location>
        <begin position="158"/>
        <end position="167"/>
    </location>
</feature>
<feature type="compositionally biased region" description="Low complexity" evidence="4">
    <location>
        <begin position="209"/>
        <end position="220"/>
    </location>
</feature>
<feature type="compositionally biased region" description="Polar residues" evidence="4">
    <location>
        <begin position="225"/>
        <end position="244"/>
    </location>
</feature>
<feature type="compositionally biased region" description="Low complexity" evidence="4">
    <location>
        <begin position="245"/>
        <end position="254"/>
    </location>
</feature>
<feature type="compositionally biased region" description="Pro residues" evidence="4">
    <location>
        <begin position="270"/>
        <end position="283"/>
    </location>
</feature>
<feature type="compositionally biased region" description="Basic and acidic residues" evidence="4">
    <location>
        <begin position="290"/>
        <end position="299"/>
    </location>
</feature>
<feature type="compositionally biased region" description="Polar residues" evidence="4">
    <location>
        <begin position="300"/>
        <end position="310"/>
    </location>
</feature>
<feature type="modified residue" description="Phosphothreonine" evidence="1">
    <location>
        <position position="96"/>
    </location>
</feature>
<feature type="modified residue" description="Phosphoserine" evidence="1">
    <location>
        <position position="98"/>
    </location>
</feature>
<feature type="modified residue" description="Phosphoserine" evidence="1">
    <location>
        <position position="126"/>
    </location>
</feature>
<feature type="modified residue" description="Phosphoserine" evidence="1">
    <location>
        <position position="131"/>
    </location>
</feature>
<feature type="modified residue" description="Phosphoserine" evidence="1">
    <location>
        <position position="252"/>
    </location>
</feature>
<feature type="modified residue" description="Phosphoserine" evidence="1">
    <location>
        <position position="254"/>
    </location>
</feature>
<feature type="modified residue" description="Phosphoserine" evidence="1">
    <location>
        <position position="267"/>
    </location>
</feature>
<feature type="modified residue" description="Phosphothreonine" evidence="1">
    <location>
        <position position="272"/>
    </location>
</feature>
<feature type="modified residue" description="Phosphoserine" evidence="1">
    <location>
        <position position="276"/>
    </location>
</feature>
<feature type="modified residue" description="Phosphoserine" evidence="1">
    <location>
        <position position="341"/>
    </location>
</feature>
<name>SMTL2_BOVIN</name>
<gene>
    <name type="primary">SMTNL2</name>
</gene>
<proteinExistence type="evidence at transcript level"/>
<reference key="1">
    <citation type="submission" date="2006-01" db="EMBL/GenBank/DDBJ databases">
        <authorList>
            <consortium name="NIH - Mammalian Gene Collection (MGC) project"/>
        </authorList>
    </citation>
    <scope>NUCLEOTIDE SEQUENCE [LARGE SCALE MRNA]</scope>
    <source>
        <strain>Hereford</strain>
        <tissue>Hypothalamus</tissue>
    </source>
</reference>
<protein>
    <recommendedName>
        <fullName>Smoothelin-like protein 2</fullName>
    </recommendedName>
</protein>
<dbReference type="EMBL" id="BC112730">
    <property type="protein sequence ID" value="AAI12731.1"/>
    <property type="molecule type" value="mRNA"/>
</dbReference>
<dbReference type="RefSeq" id="NP_001039785.1">
    <property type="nucleotide sequence ID" value="NM_001046320.1"/>
</dbReference>
<dbReference type="SMR" id="Q2KI85"/>
<dbReference type="FunCoup" id="Q2KI85">
    <property type="interactions" value="235"/>
</dbReference>
<dbReference type="STRING" id="9913.ENSBTAP00000027457"/>
<dbReference type="PaxDb" id="9913-ENSBTAP00000027457"/>
<dbReference type="GeneID" id="532143"/>
<dbReference type="KEGG" id="bta:532143"/>
<dbReference type="CTD" id="342527"/>
<dbReference type="eggNOG" id="KOG4678">
    <property type="taxonomic scope" value="Eukaryota"/>
</dbReference>
<dbReference type="HOGENOM" id="CLU_040651_5_0_1"/>
<dbReference type="InParanoid" id="Q2KI85"/>
<dbReference type="OrthoDB" id="21607at2759"/>
<dbReference type="TreeFam" id="TF316716"/>
<dbReference type="Proteomes" id="UP000009136">
    <property type="component" value="Unplaced"/>
</dbReference>
<dbReference type="CDD" id="cd21261">
    <property type="entry name" value="CH_SMTNL2"/>
    <property type="match status" value="1"/>
</dbReference>
<dbReference type="FunFam" id="1.10.418.10:FF:000009">
    <property type="entry name" value="smoothelin isoform X2"/>
    <property type="match status" value="1"/>
</dbReference>
<dbReference type="Gene3D" id="1.10.418.10">
    <property type="entry name" value="Calponin-like domain"/>
    <property type="match status" value="1"/>
</dbReference>
<dbReference type="InterPro" id="IPR001715">
    <property type="entry name" value="CH_dom"/>
</dbReference>
<dbReference type="InterPro" id="IPR036872">
    <property type="entry name" value="CH_dom_sf"/>
</dbReference>
<dbReference type="InterPro" id="IPR050540">
    <property type="entry name" value="F-actin_Monoox_Mical"/>
</dbReference>
<dbReference type="PANTHER" id="PTHR23167">
    <property type="entry name" value="CALPONIN HOMOLOGY DOMAIN-CONTAINING PROTEIN DDB_G0272472-RELATED"/>
    <property type="match status" value="1"/>
</dbReference>
<dbReference type="PANTHER" id="PTHR23167:SF37">
    <property type="entry name" value="SMOOTHELIN-LIKE PROTEIN 2"/>
    <property type="match status" value="1"/>
</dbReference>
<dbReference type="Pfam" id="PF00307">
    <property type="entry name" value="CH"/>
    <property type="match status" value="1"/>
</dbReference>
<dbReference type="SMART" id="SM00033">
    <property type="entry name" value="CH"/>
    <property type="match status" value="1"/>
</dbReference>
<dbReference type="SUPFAM" id="SSF47576">
    <property type="entry name" value="Calponin-homology domain, CH-domain"/>
    <property type="match status" value="1"/>
</dbReference>
<dbReference type="PROSITE" id="PS50021">
    <property type="entry name" value="CH"/>
    <property type="match status" value="1"/>
</dbReference>